<accession>O04023</accession>
<accession>O81814</accession>
<sequence length="324" mass="34189">MECRSLDLTIISAEDLKDVQLIGKQDLYAVVSINGDARTKQKTKVDKDCGTKPKWKHQMKLTVDDAAARDNRLTLVFEIVADRPIAGDKPVGEVSVPVKELLDQNKGDEEKTVTYAVRLPNGKAKGSLKFSFKFGEKYTYGSSSGPHAPVPSAMDHKTMDQPVTAYPPGHGAPSAYPAPPAGPSSGYPPQGHDDKHDGVYGYPQQAGYPAGTGGYPPPGAYPQQGGYPGYPPQQQGGYPGYPPQGPYGYPQQGYPPQGPYGYPQQQAHGKPQKPKKHGKAGAGMGLGLGLGAGLLGGLLVGEAVSDIADMGDMGDMGDMGGFDF</sequence>
<gene>
    <name evidence="6" type="primary">SRC2</name>
    <name evidence="9" type="ordered locus">At1g09070</name>
    <name evidence="10" type="ORF">F7G19.6</name>
</gene>
<name>SRC2_ARATH</name>
<dbReference type="EMBL" id="AJ007586">
    <property type="protein sequence ID" value="CAA07573.1"/>
    <property type="molecule type" value="mRNA"/>
</dbReference>
<dbReference type="EMBL" id="AC000106">
    <property type="protein sequence ID" value="AAB70401.1"/>
    <property type="molecule type" value="Genomic_DNA"/>
</dbReference>
<dbReference type="EMBL" id="CP002684">
    <property type="protein sequence ID" value="AEE28391.1"/>
    <property type="molecule type" value="Genomic_DNA"/>
</dbReference>
<dbReference type="EMBL" id="AY045580">
    <property type="protein sequence ID" value="AAK73938.1"/>
    <property type="molecule type" value="mRNA"/>
</dbReference>
<dbReference type="EMBL" id="AY142027">
    <property type="protein sequence ID" value="AAM98291.1"/>
    <property type="molecule type" value="mRNA"/>
</dbReference>
<dbReference type="PIR" id="G86222">
    <property type="entry name" value="G86222"/>
</dbReference>
<dbReference type="PIR" id="T51602">
    <property type="entry name" value="T51602"/>
</dbReference>
<dbReference type="RefSeq" id="NP_563835.1">
    <property type="nucleotide sequence ID" value="NM_100778.3"/>
</dbReference>
<dbReference type="SMR" id="O04023"/>
<dbReference type="FunCoup" id="O04023">
    <property type="interactions" value="420"/>
</dbReference>
<dbReference type="STRING" id="3702.O04023"/>
<dbReference type="GlyGen" id="O04023">
    <property type="glycosylation" value="3 sites, 1 O-linked glycan (3 sites)"/>
</dbReference>
<dbReference type="iPTMnet" id="O04023"/>
<dbReference type="PaxDb" id="3702-AT1G09070.1"/>
<dbReference type="ProteomicsDB" id="226720"/>
<dbReference type="EnsemblPlants" id="AT1G09070.1">
    <property type="protein sequence ID" value="AT1G09070.1"/>
    <property type="gene ID" value="AT1G09070"/>
</dbReference>
<dbReference type="GeneID" id="837428"/>
<dbReference type="Gramene" id="AT1G09070.1">
    <property type="protein sequence ID" value="AT1G09070.1"/>
    <property type="gene ID" value="AT1G09070"/>
</dbReference>
<dbReference type="KEGG" id="ath:AT1G09070"/>
<dbReference type="Araport" id="AT1G09070"/>
<dbReference type="TAIR" id="AT1G09070">
    <property type="gene designation" value="SRC2"/>
</dbReference>
<dbReference type="eggNOG" id="ENOG502QUNY">
    <property type="taxonomic scope" value="Eukaryota"/>
</dbReference>
<dbReference type="HOGENOM" id="CLU_049673_1_0_1"/>
<dbReference type="InParanoid" id="O04023"/>
<dbReference type="OMA" id="TAYPPGH"/>
<dbReference type="PhylomeDB" id="O04023"/>
<dbReference type="PRO" id="PR:O04023"/>
<dbReference type="Proteomes" id="UP000006548">
    <property type="component" value="Chromosome 1"/>
</dbReference>
<dbReference type="ExpressionAtlas" id="O04023">
    <property type="expression patterns" value="baseline and differential"/>
</dbReference>
<dbReference type="GO" id="GO:0005783">
    <property type="term" value="C:endoplasmic reticulum"/>
    <property type="evidence" value="ECO:0000314"/>
    <property type="project" value="TAIR"/>
</dbReference>
<dbReference type="GO" id="GO:0005789">
    <property type="term" value="C:endoplasmic reticulum membrane"/>
    <property type="evidence" value="ECO:0007669"/>
    <property type="project" value="UniProtKB-SubCell"/>
</dbReference>
<dbReference type="GO" id="GO:0005576">
    <property type="term" value="C:extracellular region"/>
    <property type="evidence" value="ECO:0007005"/>
    <property type="project" value="TAIR"/>
</dbReference>
<dbReference type="GO" id="GO:0005886">
    <property type="term" value="C:plasma membrane"/>
    <property type="evidence" value="ECO:0007005"/>
    <property type="project" value="TAIR"/>
</dbReference>
<dbReference type="GO" id="GO:0000326">
    <property type="term" value="C:protein storage vacuole"/>
    <property type="evidence" value="ECO:0000314"/>
    <property type="project" value="TAIR"/>
</dbReference>
<dbReference type="GO" id="GO:0032586">
    <property type="term" value="C:protein storage vacuole membrane"/>
    <property type="evidence" value="ECO:0007669"/>
    <property type="project" value="UniProtKB-SubCell"/>
</dbReference>
<dbReference type="GO" id="GO:0071456">
    <property type="term" value="P:cellular response to hypoxia"/>
    <property type="evidence" value="ECO:0007007"/>
    <property type="project" value="TAIR"/>
</dbReference>
<dbReference type="GO" id="GO:0006952">
    <property type="term" value="P:defense response"/>
    <property type="evidence" value="ECO:0007669"/>
    <property type="project" value="InterPro"/>
</dbReference>
<dbReference type="GO" id="GO:0006623">
    <property type="term" value="P:protein targeting to vacuole"/>
    <property type="evidence" value="ECO:0000304"/>
    <property type="project" value="TAIR"/>
</dbReference>
<dbReference type="CDD" id="cd04051">
    <property type="entry name" value="C2_SRC2_like"/>
    <property type="match status" value="1"/>
</dbReference>
<dbReference type="FunFam" id="2.60.40.150:FF:000420">
    <property type="entry name" value="Protein SRC2 homolog"/>
    <property type="match status" value="1"/>
</dbReference>
<dbReference type="Gene3D" id="2.60.40.150">
    <property type="entry name" value="C2 domain"/>
    <property type="match status" value="1"/>
</dbReference>
<dbReference type="InterPro" id="IPR000008">
    <property type="entry name" value="C2_dom"/>
</dbReference>
<dbReference type="InterPro" id="IPR035892">
    <property type="entry name" value="C2_domain_sf"/>
</dbReference>
<dbReference type="InterPro" id="IPR044750">
    <property type="entry name" value="C2_SRC2/BAP"/>
</dbReference>
<dbReference type="PANTHER" id="PTHR32246">
    <property type="entry name" value="INGRESSION PROTEIN FIC1"/>
    <property type="match status" value="1"/>
</dbReference>
<dbReference type="PANTHER" id="PTHR32246:SF168">
    <property type="entry name" value="PROTEIN SRC2 HOMOLOG"/>
    <property type="match status" value="1"/>
</dbReference>
<dbReference type="Pfam" id="PF00168">
    <property type="entry name" value="C2"/>
    <property type="match status" value="1"/>
</dbReference>
<dbReference type="SMART" id="SM00239">
    <property type="entry name" value="C2"/>
    <property type="match status" value="1"/>
</dbReference>
<dbReference type="SUPFAM" id="SSF49562">
    <property type="entry name" value="C2 domain (Calcium/lipid-binding domain, CaLB)"/>
    <property type="match status" value="1"/>
</dbReference>
<dbReference type="PROSITE" id="PS50004">
    <property type="entry name" value="C2"/>
    <property type="match status" value="1"/>
</dbReference>
<evidence type="ECO:0000255" key="1"/>
<evidence type="ECO:0000255" key="2">
    <source>
        <dbReference type="PROSITE-ProRule" id="PRU00041"/>
    </source>
</evidence>
<evidence type="ECO:0000256" key="3">
    <source>
        <dbReference type="SAM" id="MobiDB-lite"/>
    </source>
</evidence>
<evidence type="ECO:0000269" key="4">
    <source>
    </source>
</evidence>
<evidence type="ECO:0000269" key="5">
    <source>
    </source>
</evidence>
<evidence type="ECO:0000303" key="6">
    <source>
    </source>
</evidence>
<evidence type="ECO:0000305" key="7"/>
<evidence type="ECO:0000305" key="8">
    <source>
    </source>
</evidence>
<evidence type="ECO:0000312" key="9">
    <source>
        <dbReference type="Araport" id="AT1G09070"/>
    </source>
</evidence>
<evidence type="ECO:0000312" key="10">
    <source>
        <dbReference type="EMBL" id="AAB70401.1"/>
    </source>
</evidence>
<comment type="function">
    <text evidence="5">May act as an activator of the calcium-dependent activation of RBOHF that mediates reactive oxygen species (ROS) production and may play a role in cold responses.</text>
</comment>
<comment type="subunit">
    <text evidence="5">Interacts with RBOHF (via N-terminus).</text>
</comment>
<comment type="subcellular location">
    <subcellularLocation>
        <location evidence="4">Endoplasmic reticulum membrane</location>
        <topology evidence="1">Single-pass type II membrane protein</topology>
    </subcellularLocation>
    <subcellularLocation>
        <location evidence="4">Protein storage vacuole membrane</location>
        <topology evidence="1">Single-pass type II membrane protein</topology>
    </subcellularLocation>
    <subcellularLocation>
        <location evidence="8">Cell membrane</location>
        <topology evidence="1">Single-pass type II membrane protein</topology>
    </subcellularLocation>
    <text evidence="4">Binds to C-terminal sequence of alpha-TIP and moves from the ER to vacuoles. Movement is accompanied by membrane internalization, and SRC2 is present in crystalloid-like structures within protein storage vacuoles (PSVs) in mature seeds.</text>
</comment>
<comment type="induction">
    <text evidence="4">By cold stress in roots.</text>
</comment>
<reference key="1">
    <citation type="journal article" date="1999" name="Gene">
        <title>Structure and expression of three src2 homologues and a novel subfamily of flavoprotein monooxygenase genes revealed by the analysis of a 25kb fragment from Arabidopsis thaliana chromosome IV.</title>
        <authorList>
            <person name="Aubourg S."/>
            <person name="Picaud A."/>
            <person name="Kreis M."/>
            <person name="Lecharny A."/>
        </authorList>
    </citation>
    <scope>NUCLEOTIDE SEQUENCE [MRNA]</scope>
    <source>
        <strain>cv. Columbia</strain>
    </source>
</reference>
<reference key="2">
    <citation type="journal article" date="2000" name="Nature">
        <title>Sequence and analysis of chromosome 1 of the plant Arabidopsis thaliana.</title>
        <authorList>
            <person name="Theologis A."/>
            <person name="Ecker J.R."/>
            <person name="Palm C.J."/>
            <person name="Federspiel N.A."/>
            <person name="Kaul S."/>
            <person name="White O."/>
            <person name="Alonso J."/>
            <person name="Altafi H."/>
            <person name="Araujo R."/>
            <person name="Bowman C.L."/>
            <person name="Brooks S.Y."/>
            <person name="Buehler E."/>
            <person name="Chan A."/>
            <person name="Chao Q."/>
            <person name="Chen H."/>
            <person name="Cheuk R.F."/>
            <person name="Chin C.W."/>
            <person name="Chung M.K."/>
            <person name="Conn L."/>
            <person name="Conway A.B."/>
            <person name="Conway A.R."/>
            <person name="Creasy T.H."/>
            <person name="Dewar K."/>
            <person name="Dunn P."/>
            <person name="Etgu P."/>
            <person name="Feldblyum T.V."/>
            <person name="Feng J.-D."/>
            <person name="Fong B."/>
            <person name="Fujii C.Y."/>
            <person name="Gill J.E."/>
            <person name="Goldsmith A.D."/>
            <person name="Haas B."/>
            <person name="Hansen N.F."/>
            <person name="Hughes B."/>
            <person name="Huizar L."/>
            <person name="Hunter J.L."/>
            <person name="Jenkins J."/>
            <person name="Johnson-Hopson C."/>
            <person name="Khan S."/>
            <person name="Khaykin E."/>
            <person name="Kim C.J."/>
            <person name="Koo H.L."/>
            <person name="Kremenetskaia I."/>
            <person name="Kurtz D.B."/>
            <person name="Kwan A."/>
            <person name="Lam B."/>
            <person name="Langin-Hooper S."/>
            <person name="Lee A."/>
            <person name="Lee J.M."/>
            <person name="Lenz C.A."/>
            <person name="Li J.H."/>
            <person name="Li Y.-P."/>
            <person name="Lin X."/>
            <person name="Liu S.X."/>
            <person name="Liu Z.A."/>
            <person name="Luros J.S."/>
            <person name="Maiti R."/>
            <person name="Marziali A."/>
            <person name="Militscher J."/>
            <person name="Miranda M."/>
            <person name="Nguyen M."/>
            <person name="Nierman W.C."/>
            <person name="Osborne B.I."/>
            <person name="Pai G."/>
            <person name="Peterson J."/>
            <person name="Pham P.K."/>
            <person name="Rizzo M."/>
            <person name="Rooney T."/>
            <person name="Rowley D."/>
            <person name="Sakano H."/>
            <person name="Salzberg S.L."/>
            <person name="Schwartz J.R."/>
            <person name="Shinn P."/>
            <person name="Southwick A.M."/>
            <person name="Sun H."/>
            <person name="Tallon L.J."/>
            <person name="Tambunga G."/>
            <person name="Toriumi M.J."/>
            <person name="Town C.D."/>
            <person name="Utterback T."/>
            <person name="Van Aken S."/>
            <person name="Vaysberg M."/>
            <person name="Vysotskaia V.S."/>
            <person name="Walker M."/>
            <person name="Wu D."/>
            <person name="Yu G."/>
            <person name="Fraser C.M."/>
            <person name="Venter J.C."/>
            <person name="Davis R.W."/>
        </authorList>
    </citation>
    <scope>NUCLEOTIDE SEQUENCE [LARGE SCALE GENOMIC DNA]</scope>
    <source>
        <strain>cv. Columbia</strain>
    </source>
</reference>
<reference key="3">
    <citation type="journal article" date="2017" name="Plant J.">
        <title>Araport11: a complete reannotation of the Arabidopsis thaliana reference genome.</title>
        <authorList>
            <person name="Cheng C.Y."/>
            <person name="Krishnakumar V."/>
            <person name="Chan A.P."/>
            <person name="Thibaud-Nissen F."/>
            <person name="Schobel S."/>
            <person name="Town C.D."/>
        </authorList>
    </citation>
    <scope>GENOME REANNOTATION</scope>
    <source>
        <strain>cv. Columbia</strain>
    </source>
</reference>
<reference key="4">
    <citation type="journal article" date="2003" name="Science">
        <title>Empirical analysis of transcriptional activity in the Arabidopsis genome.</title>
        <authorList>
            <person name="Yamada K."/>
            <person name="Lim J."/>
            <person name="Dale J.M."/>
            <person name="Chen H."/>
            <person name="Shinn P."/>
            <person name="Palm C.J."/>
            <person name="Southwick A.M."/>
            <person name="Wu H.C."/>
            <person name="Kim C.J."/>
            <person name="Nguyen M."/>
            <person name="Pham P.K."/>
            <person name="Cheuk R.F."/>
            <person name="Karlin-Newmann G."/>
            <person name="Liu S.X."/>
            <person name="Lam B."/>
            <person name="Sakano H."/>
            <person name="Wu T."/>
            <person name="Yu G."/>
            <person name="Miranda M."/>
            <person name="Quach H.L."/>
            <person name="Tripp M."/>
            <person name="Chang C.H."/>
            <person name="Lee J.M."/>
            <person name="Toriumi M.J."/>
            <person name="Chan M.M."/>
            <person name="Tang C.C."/>
            <person name="Onodera C.S."/>
            <person name="Deng J.M."/>
            <person name="Akiyama K."/>
            <person name="Ansari Y."/>
            <person name="Arakawa T."/>
            <person name="Banh J."/>
            <person name="Banno F."/>
            <person name="Bowser L."/>
            <person name="Brooks S.Y."/>
            <person name="Carninci P."/>
            <person name="Chao Q."/>
            <person name="Choy N."/>
            <person name="Enju A."/>
            <person name="Goldsmith A.D."/>
            <person name="Gurjal M."/>
            <person name="Hansen N.F."/>
            <person name="Hayashizaki Y."/>
            <person name="Johnson-Hopson C."/>
            <person name="Hsuan V.W."/>
            <person name="Iida K."/>
            <person name="Karnes M."/>
            <person name="Khan S."/>
            <person name="Koesema E."/>
            <person name="Ishida J."/>
            <person name="Jiang P.X."/>
            <person name="Jones T."/>
            <person name="Kawai J."/>
            <person name="Kamiya A."/>
            <person name="Meyers C."/>
            <person name="Nakajima M."/>
            <person name="Narusaka M."/>
            <person name="Seki M."/>
            <person name="Sakurai T."/>
            <person name="Satou M."/>
            <person name="Tamse R."/>
            <person name="Vaysberg M."/>
            <person name="Wallender E.K."/>
            <person name="Wong C."/>
            <person name="Yamamura Y."/>
            <person name="Yuan S."/>
            <person name="Shinozaki K."/>
            <person name="Davis R.W."/>
            <person name="Theologis A."/>
            <person name="Ecker J.R."/>
        </authorList>
    </citation>
    <scope>NUCLEOTIDE SEQUENCE [LARGE SCALE MRNA]</scope>
    <source>
        <strain>cv. Columbia</strain>
    </source>
</reference>
<reference key="5">
    <citation type="journal article" date="2005" name="Plant Cell">
        <title>Selective membrane protein internalization accompanies movement from the endoplasmic reticulum to the protein storage vacuole pathway in Arabidopsis.</title>
        <authorList>
            <person name="Oufattole M."/>
            <person name="Park J.H."/>
            <person name="Poxleitner M."/>
            <person name="Jiang L."/>
            <person name="Rogers J.C."/>
        </authorList>
    </citation>
    <scope>SUBCELLULAR LOCATION</scope>
    <scope>TOPOLOGY</scope>
</reference>
<reference key="6">
    <citation type="journal article" date="2013" name="Biochim. Biophys. Acta">
        <title>A low temperature-inducible protein AtSRC2 enhances the ROS-producing activity of NADPH oxidase AtRbohF.</title>
        <authorList>
            <person name="Kawarazaki T."/>
            <person name="Kimura S."/>
            <person name="Iizuka A."/>
            <person name="Hanamata S."/>
            <person name="Nibori H."/>
            <person name="Michikawa M."/>
            <person name="Imai A."/>
            <person name="Abe M."/>
            <person name="Kaya H."/>
            <person name="Kuchitsu K."/>
        </authorList>
    </citation>
    <scope>FUNCTION</scope>
    <scope>INTERACTION WITH RBOHF</scope>
    <scope>SUBCELLULAR LOCATION</scope>
    <scope>INDUCTION BY COLD STRESS</scope>
</reference>
<feature type="chain" id="PRO_0000433973" description="Protein SRC2 homolog">
    <location>
        <begin position="1"/>
        <end position="324"/>
    </location>
</feature>
<feature type="topological domain" description="Cytoplasmic" evidence="4">
    <location>
        <begin position="1"/>
        <end position="279"/>
    </location>
</feature>
<feature type="transmembrane region" description="Helical; Signal-anchor" evidence="1">
    <location>
        <begin position="280"/>
        <end position="300"/>
    </location>
</feature>
<feature type="topological domain" description="Lumenal" evidence="4">
    <location>
        <begin position="301"/>
        <end position="324"/>
    </location>
</feature>
<feature type="domain" description="C2" evidence="2">
    <location>
        <begin position="1"/>
        <end position="111"/>
    </location>
</feature>
<feature type="region of interest" description="Disordered" evidence="3">
    <location>
        <begin position="141"/>
        <end position="281"/>
    </location>
</feature>
<feature type="compositionally biased region" description="Low complexity" evidence="3">
    <location>
        <begin position="166"/>
        <end position="175"/>
    </location>
</feature>
<feature type="compositionally biased region" description="Low complexity" evidence="3">
    <location>
        <begin position="246"/>
        <end position="269"/>
    </location>
</feature>
<feature type="compositionally biased region" description="Basic residues" evidence="3">
    <location>
        <begin position="270"/>
        <end position="279"/>
    </location>
</feature>
<feature type="sequence conflict" description="In Ref. 1; CAA07573." evidence="7" ref="1">
    <original>D</original>
    <variation>G</variation>
    <location>
        <position position="197"/>
    </location>
</feature>
<keyword id="KW-1003">Cell membrane</keyword>
<keyword id="KW-0256">Endoplasmic reticulum</keyword>
<keyword id="KW-0472">Membrane</keyword>
<keyword id="KW-1185">Reference proteome</keyword>
<keyword id="KW-0735">Signal-anchor</keyword>
<keyword id="KW-0346">Stress response</keyword>
<keyword id="KW-0812">Transmembrane</keyword>
<keyword id="KW-1133">Transmembrane helix</keyword>
<keyword id="KW-0926">Vacuole</keyword>
<protein>
    <recommendedName>
        <fullName evidence="7">Protein SRC2 homolog</fullName>
        <shortName evidence="6">AtSRC2</shortName>
    </recommendedName>
</protein>
<proteinExistence type="evidence at protein level"/>
<organism>
    <name type="scientific">Arabidopsis thaliana</name>
    <name type="common">Mouse-ear cress</name>
    <dbReference type="NCBI Taxonomy" id="3702"/>
    <lineage>
        <taxon>Eukaryota</taxon>
        <taxon>Viridiplantae</taxon>
        <taxon>Streptophyta</taxon>
        <taxon>Embryophyta</taxon>
        <taxon>Tracheophyta</taxon>
        <taxon>Spermatophyta</taxon>
        <taxon>Magnoliopsida</taxon>
        <taxon>eudicotyledons</taxon>
        <taxon>Gunneridae</taxon>
        <taxon>Pentapetalae</taxon>
        <taxon>rosids</taxon>
        <taxon>malvids</taxon>
        <taxon>Brassicales</taxon>
        <taxon>Brassicaceae</taxon>
        <taxon>Camelineae</taxon>
        <taxon>Arabidopsis</taxon>
    </lineage>
</organism>